<protein>
    <recommendedName>
        <fullName evidence="1">Orotate phosphoribosyltransferase</fullName>
        <shortName evidence="1">OPRT</shortName>
        <shortName evidence="1">OPRTase</shortName>
        <ecNumber evidence="1">2.4.2.10</ecNumber>
    </recommendedName>
</protein>
<proteinExistence type="inferred from homology"/>
<gene>
    <name evidence="1" type="primary">pyrE</name>
    <name type="ordered locus">Rsph17029_0580</name>
</gene>
<sequence length="232" mass="25574">MIPTSFPPREEIARLTARMLLEIEAVHFRPQEPFTLASGLPSPTYIDCRKLISYPRIRSTLMDFMAVTLLRDAGFEAFDNIAGGETAGIPFAALVAERLGLPMTYVRKKPKGYGRNARIEGVMTEGQRVLLVEDLTTDGGSKLSFVDAIRETGASCAHTAVIFYYGIFPETIGRLQAHGVTLHHLCTWWDVLAEARASGAFDAGTLAEVESFLSNPRDWQDARKPADPTKSL</sequence>
<reference key="1">
    <citation type="submission" date="2007-02" db="EMBL/GenBank/DDBJ databases">
        <title>Complete sequence of chromosome 1 of Rhodobacter sphaeroides ATCC 17029.</title>
        <authorList>
            <person name="Copeland A."/>
            <person name="Lucas S."/>
            <person name="Lapidus A."/>
            <person name="Barry K."/>
            <person name="Detter J.C."/>
            <person name="Glavina del Rio T."/>
            <person name="Hammon N."/>
            <person name="Israni S."/>
            <person name="Dalin E."/>
            <person name="Tice H."/>
            <person name="Pitluck S."/>
            <person name="Kiss H."/>
            <person name="Brettin T."/>
            <person name="Bruce D."/>
            <person name="Han C."/>
            <person name="Tapia R."/>
            <person name="Gilna P."/>
            <person name="Schmutz J."/>
            <person name="Larimer F."/>
            <person name="Land M."/>
            <person name="Hauser L."/>
            <person name="Kyrpides N."/>
            <person name="Mikhailova N."/>
            <person name="Richardson P."/>
            <person name="Mackenzie C."/>
            <person name="Choudhary M."/>
            <person name="Donohue T.J."/>
            <person name="Kaplan S."/>
        </authorList>
    </citation>
    <scope>NUCLEOTIDE SEQUENCE [LARGE SCALE GENOMIC DNA]</scope>
    <source>
        <strain>ATCC 17029 / ATH 2.4.9</strain>
    </source>
</reference>
<organism>
    <name type="scientific">Cereibacter sphaeroides (strain ATCC 17029 / ATH 2.4.9)</name>
    <name type="common">Rhodobacter sphaeroides</name>
    <dbReference type="NCBI Taxonomy" id="349101"/>
    <lineage>
        <taxon>Bacteria</taxon>
        <taxon>Pseudomonadati</taxon>
        <taxon>Pseudomonadota</taxon>
        <taxon>Alphaproteobacteria</taxon>
        <taxon>Rhodobacterales</taxon>
        <taxon>Paracoccaceae</taxon>
        <taxon>Cereibacter</taxon>
    </lineage>
</organism>
<name>PYRE_CERS1</name>
<evidence type="ECO:0000255" key="1">
    <source>
        <dbReference type="HAMAP-Rule" id="MF_01208"/>
    </source>
</evidence>
<comment type="function">
    <text evidence="1">Catalyzes the transfer of a ribosyl phosphate group from 5-phosphoribose 1-diphosphate to orotate, leading to the formation of orotidine monophosphate (OMP).</text>
</comment>
<comment type="catalytic activity">
    <reaction evidence="1">
        <text>orotidine 5'-phosphate + diphosphate = orotate + 5-phospho-alpha-D-ribose 1-diphosphate</text>
        <dbReference type="Rhea" id="RHEA:10380"/>
        <dbReference type="ChEBI" id="CHEBI:30839"/>
        <dbReference type="ChEBI" id="CHEBI:33019"/>
        <dbReference type="ChEBI" id="CHEBI:57538"/>
        <dbReference type="ChEBI" id="CHEBI:58017"/>
        <dbReference type="EC" id="2.4.2.10"/>
    </reaction>
</comment>
<comment type="cofactor">
    <cofactor evidence="1">
        <name>Mg(2+)</name>
        <dbReference type="ChEBI" id="CHEBI:18420"/>
    </cofactor>
</comment>
<comment type="pathway">
    <text evidence="1">Pyrimidine metabolism; UMP biosynthesis via de novo pathway; UMP from orotate: step 1/2.</text>
</comment>
<comment type="subunit">
    <text evidence="1">Homodimer.</text>
</comment>
<comment type="similarity">
    <text evidence="1">Belongs to the purine/pyrimidine phosphoribosyltransferase family. PyrE subfamily.</text>
</comment>
<feature type="chain" id="PRO_1000066286" description="Orotate phosphoribosyltransferase">
    <location>
        <begin position="1"/>
        <end position="232"/>
    </location>
</feature>
<feature type="binding site" evidence="1">
    <location>
        <position position="107"/>
    </location>
    <ligand>
        <name>5-phospho-alpha-D-ribose 1-diphosphate</name>
        <dbReference type="ChEBI" id="CHEBI:58017"/>
        <note>ligand shared between dimeric partners</note>
    </ligand>
</feature>
<feature type="binding site" description="in other chain" evidence="1">
    <location>
        <position position="108"/>
    </location>
    <ligand>
        <name>5-phospho-alpha-D-ribose 1-diphosphate</name>
        <dbReference type="ChEBI" id="CHEBI:58017"/>
        <note>ligand shared between dimeric partners</note>
    </ligand>
</feature>
<feature type="binding site" evidence="1">
    <location>
        <position position="111"/>
    </location>
    <ligand>
        <name>5-phospho-alpha-D-ribose 1-diphosphate</name>
        <dbReference type="ChEBI" id="CHEBI:58017"/>
        <note>ligand shared between dimeric partners</note>
    </ligand>
</feature>
<feature type="binding site" description="in other chain" evidence="1">
    <location>
        <begin position="133"/>
        <end position="141"/>
    </location>
    <ligand>
        <name>5-phospho-alpha-D-ribose 1-diphosphate</name>
        <dbReference type="ChEBI" id="CHEBI:58017"/>
        <note>ligand shared between dimeric partners</note>
    </ligand>
</feature>
<feature type="binding site" evidence="1">
    <location>
        <position position="137"/>
    </location>
    <ligand>
        <name>orotate</name>
        <dbReference type="ChEBI" id="CHEBI:30839"/>
    </ligand>
</feature>
<dbReference type="EC" id="2.4.2.10" evidence="1"/>
<dbReference type="EMBL" id="CP000577">
    <property type="protein sequence ID" value="ABN75696.1"/>
    <property type="molecule type" value="Genomic_DNA"/>
</dbReference>
<dbReference type="RefSeq" id="WP_011840447.1">
    <property type="nucleotide sequence ID" value="NC_009049.1"/>
</dbReference>
<dbReference type="SMR" id="A3PH80"/>
<dbReference type="KEGG" id="rsh:Rsph17029_0580"/>
<dbReference type="HOGENOM" id="CLU_074878_1_0_5"/>
<dbReference type="UniPathway" id="UPA00070">
    <property type="reaction ID" value="UER00119"/>
</dbReference>
<dbReference type="GO" id="GO:0000287">
    <property type="term" value="F:magnesium ion binding"/>
    <property type="evidence" value="ECO:0007669"/>
    <property type="project" value="UniProtKB-UniRule"/>
</dbReference>
<dbReference type="GO" id="GO:0004588">
    <property type="term" value="F:orotate phosphoribosyltransferase activity"/>
    <property type="evidence" value="ECO:0007669"/>
    <property type="project" value="UniProtKB-UniRule"/>
</dbReference>
<dbReference type="GO" id="GO:0044205">
    <property type="term" value="P:'de novo' UMP biosynthetic process"/>
    <property type="evidence" value="ECO:0007669"/>
    <property type="project" value="UniProtKB-UniRule"/>
</dbReference>
<dbReference type="GO" id="GO:0019856">
    <property type="term" value="P:pyrimidine nucleobase biosynthetic process"/>
    <property type="evidence" value="ECO:0007669"/>
    <property type="project" value="TreeGrafter"/>
</dbReference>
<dbReference type="CDD" id="cd06223">
    <property type="entry name" value="PRTases_typeI"/>
    <property type="match status" value="1"/>
</dbReference>
<dbReference type="Gene3D" id="3.40.50.2020">
    <property type="match status" value="1"/>
</dbReference>
<dbReference type="HAMAP" id="MF_01208">
    <property type="entry name" value="PyrE"/>
    <property type="match status" value="1"/>
</dbReference>
<dbReference type="InterPro" id="IPR023031">
    <property type="entry name" value="OPRT"/>
</dbReference>
<dbReference type="InterPro" id="IPR000836">
    <property type="entry name" value="PRibTrfase_dom"/>
</dbReference>
<dbReference type="InterPro" id="IPR029057">
    <property type="entry name" value="PRTase-like"/>
</dbReference>
<dbReference type="NCBIfam" id="NF001729">
    <property type="entry name" value="PRK00455.1-3"/>
    <property type="match status" value="1"/>
</dbReference>
<dbReference type="PANTHER" id="PTHR19278">
    <property type="entry name" value="OROTATE PHOSPHORIBOSYLTRANSFERASE"/>
    <property type="match status" value="1"/>
</dbReference>
<dbReference type="PANTHER" id="PTHR19278:SF9">
    <property type="entry name" value="URIDINE 5'-MONOPHOSPHATE SYNTHASE"/>
    <property type="match status" value="1"/>
</dbReference>
<dbReference type="Pfam" id="PF00156">
    <property type="entry name" value="Pribosyltran"/>
    <property type="match status" value="1"/>
</dbReference>
<dbReference type="SUPFAM" id="SSF53271">
    <property type="entry name" value="PRTase-like"/>
    <property type="match status" value="1"/>
</dbReference>
<keyword id="KW-0328">Glycosyltransferase</keyword>
<keyword id="KW-0460">Magnesium</keyword>
<keyword id="KW-0665">Pyrimidine biosynthesis</keyword>
<keyword id="KW-0808">Transferase</keyword>
<accession>A3PH80</accession>